<comment type="catalytic activity">
    <reaction>
        <text>ATP + H2O = ADP + phosphate + H(+)</text>
        <dbReference type="Rhea" id="RHEA:13065"/>
        <dbReference type="ChEBI" id="CHEBI:15377"/>
        <dbReference type="ChEBI" id="CHEBI:15378"/>
        <dbReference type="ChEBI" id="CHEBI:30616"/>
        <dbReference type="ChEBI" id="CHEBI:43474"/>
        <dbReference type="ChEBI" id="CHEBI:456216"/>
        <dbReference type="EC" id="3.6.4.13"/>
    </reaction>
</comment>
<comment type="subcellular location">
    <subcellularLocation>
        <location evidence="3">Virion</location>
    </subcellularLocation>
</comment>
<comment type="similarity">
    <text evidence="4">Belongs to the DEAD box helicase family. DEAH subfamily.</text>
</comment>
<name>YL540_MIMIV</name>
<organismHost>
    <name type="scientific">Acanthamoeba polyphaga</name>
    <name type="common">Amoeba</name>
    <dbReference type="NCBI Taxonomy" id="5757"/>
</organismHost>
<reference key="1">
    <citation type="journal article" date="2004" name="Science">
        <title>The 1.2-megabase genome sequence of Mimivirus.</title>
        <authorList>
            <person name="Raoult D."/>
            <person name="Audic S."/>
            <person name="Robert C."/>
            <person name="Abergel C."/>
            <person name="Renesto P."/>
            <person name="Ogata H."/>
            <person name="La Scola B."/>
            <person name="Susan M."/>
            <person name="Claverie J.-M."/>
        </authorList>
    </citation>
    <scope>NUCLEOTIDE SEQUENCE [LARGE SCALE GENOMIC DNA]</scope>
    <source>
        <strain>Rowbotham-Bradford</strain>
    </source>
</reference>
<reference key="2">
    <citation type="journal article" date="2006" name="J. Virol.">
        <title>Mimivirus giant particles incorporate a large fraction of anonymous and unique gene products.</title>
        <authorList>
            <person name="Renesto P."/>
            <person name="Abergel C."/>
            <person name="Decloquement P."/>
            <person name="Moinier D."/>
            <person name="Azza S."/>
            <person name="Ogata H."/>
            <person name="Fourquet P."/>
            <person name="Gorvel J.-P."/>
            <person name="Claverie J.-M."/>
            <person name="Raoult D."/>
        </authorList>
    </citation>
    <scope>IDENTIFICATION BY MASS SPECTROMETRY [LARGE SCALE ANALYSIS]</scope>
    <scope>SUBCELLULAR LOCATION</scope>
</reference>
<sequence>MASNLTFEDKIGILDPKGLRPNPLNNEPYSDDYKKLAMVWSTYPAYSAADRVLSALENYQLVFVTSSTGSGKSVLIPKLALHYTNYNGRVVMTLPKRIITLSAAIFSAKVSDVKLGESIGYAYKGSDKSMYNDQNKIIYVTDGIFVMEYVRDPLLSKFNVVIIDEAHERRIQIDLILLFLRTLLQSGNRPDLKVIIMSATIDTDKYQKYFNSVDSTVIDIAGQPNHPIETHFMDKPVTSYMKEGLELIEDLIHQQIKKDMLFFITTSNEALQLCRSIRPQYPRVYCVEVYSDMDKNLKQYAESRDKYLELGNYDQKLVMATNVAESSLTIDGLVYVIDSGYELSSRFDPECYGQILEKKFVSKAQALQRRGRVGRTEPGVCYHLLTKQQFDGLADYPTPDILRQDITMDLIKIIQVSPNKTYAEGINMMNQLMDPPLRSHINATRNLFDLYNVVDDNGILTQVGIVATQFSSLPLNRILFLIYAFELQCAREASIIVAMTEFLNGRVTNLFYKSDTICESNCEKQAANLLLEKLIQKRGDHFTYLKIYQEFSKSTDQKSWARKYGVRLDTINNIERTANQYFYRILNLLRKPRLPNNKNTLIDTSIDTPMDIQSRISSTDTKTNLLNALKKSHQHLTASKLKPTYSKENITGKISRDSVLNQIYKKNEISKKKIIYDELSNINGKWEFRTVTIIS</sequence>
<feature type="chain" id="PRO_0000247281" description="Putative ATP-dependent RNA helicase L540">
    <location>
        <begin position="1"/>
        <end position="695"/>
    </location>
</feature>
<feature type="domain" description="Helicase ATP-binding" evidence="1">
    <location>
        <begin position="53"/>
        <end position="219"/>
    </location>
</feature>
<feature type="domain" description="Helicase C-terminal" evidence="2">
    <location>
        <begin position="247"/>
        <end position="434"/>
    </location>
</feature>
<feature type="short sequence motif" description="DEAH box">
    <location>
        <begin position="164"/>
        <end position="167"/>
    </location>
</feature>
<feature type="binding site" evidence="1">
    <location>
        <begin position="66"/>
        <end position="73"/>
    </location>
    <ligand>
        <name>ATP</name>
        <dbReference type="ChEBI" id="CHEBI:30616"/>
    </ligand>
</feature>
<evidence type="ECO:0000255" key="1">
    <source>
        <dbReference type="PROSITE-ProRule" id="PRU00541"/>
    </source>
</evidence>
<evidence type="ECO:0000255" key="2">
    <source>
        <dbReference type="PROSITE-ProRule" id="PRU00542"/>
    </source>
</evidence>
<evidence type="ECO:0000269" key="3">
    <source>
    </source>
</evidence>
<evidence type="ECO:0000305" key="4"/>
<organism>
    <name type="scientific">Acanthamoeba polyphaga mimivirus</name>
    <name type="common">APMV</name>
    <dbReference type="NCBI Taxonomy" id="212035"/>
    <lineage>
        <taxon>Viruses</taxon>
        <taxon>Varidnaviria</taxon>
        <taxon>Bamfordvirae</taxon>
        <taxon>Nucleocytoviricota</taxon>
        <taxon>Megaviricetes</taxon>
        <taxon>Imitervirales</taxon>
        <taxon>Mimiviridae</taxon>
        <taxon>Megamimivirinae</taxon>
        <taxon>Mimivirus</taxon>
        <taxon>Mimivirus bradfordmassiliense</taxon>
    </lineage>
</organism>
<gene>
    <name type="ordered locus">MIMI_L540</name>
</gene>
<dbReference type="EC" id="3.6.4.13"/>
<dbReference type="EMBL" id="AY653733">
    <property type="protein sequence ID" value="AAV50804.1"/>
    <property type="molecule type" value="Genomic_DNA"/>
</dbReference>
<dbReference type="SMR" id="Q5UQ96"/>
<dbReference type="KEGG" id="vg:9925174"/>
<dbReference type="OrthoDB" id="2033at10239"/>
<dbReference type="Proteomes" id="UP000001134">
    <property type="component" value="Genome"/>
</dbReference>
<dbReference type="GO" id="GO:0044423">
    <property type="term" value="C:virion component"/>
    <property type="evidence" value="ECO:0007669"/>
    <property type="project" value="UniProtKB-KW"/>
</dbReference>
<dbReference type="GO" id="GO:0005524">
    <property type="term" value="F:ATP binding"/>
    <property type="evidence" value="ECO:0007669"/>
    <property type="project" value="UniProtKB-KW"/>
</dbReference>
<dbReference type="GO" id="GO:0016887">
    <property type="term" value="F:ATP hydrolysis activity"/>
    <property type="evidence" value="ECO:0007669"/>
    <property type="project" value="RHEA"/>
</dbReference>
<dbReference type="GO" id="GO:0003723">
    <property type="term" value="F:RNA binding"/>
    <property type="evidence" value="ECO:0007669"/>
    <property type="project" value="TreeGrafter"/>
</dbReference>
<dbReference type="GO" id="GO:0003724">
    <property type="term" value="F:RNA helicase activity"/>
    <property type="evidence" value="ECO:0007669"/>
    <property type="project" value="UniProtKB-EC"/>
</dbReference>
<dbReference type="CDD" id="cd17917">
    <property type="entry name" value="DEXHc_RHA-like"/>
    <property type="match status" value="1"/>
</dbReference>
<dbReference type="CDD" id="cd18791">
    <property type="entry name" value="SF2_C_RHA"/>
    <property type="match status" value="1"/>
</dbReference>
<dbReference type="Gene3D" id="1.20.120.1080">
    <property type="match status" value="1"/>
</dbReference>
<dbReference type="Gene3D" id="3.40.50.300">
    <property type="entry name" value="P-loop containing nucleotide triphosphate hydrolases"/>
    <property type="match status" value="2"/>
</dbReference>
<dbReference type="InterPro" id="IPR011545">
    <property type="entry name" value="DEAD/DEAH_box_helicase_dom"/>
</dbReference>
<dbReference type="InterPro" id="IPR014001">
    <property type="entry name" value="Helicase_ATP-bd"/>
</dbReference>
<dbReference type="InterPro" id="IPR001650">
    <property type="entry name" value="Helicase_C-like"/>
</dbReference>
<dbReference type="InterPro" id="IPR027417">
    <property type="entry name" value="P-loop_NTPase"/>
</dbReference>
<dbReference type="PANTHER" id="PTHR18934">
    <property type="entry name" value="ATP-DEPENDENT RNA HELICASE"/>
    <property type="match status" value="1"/>
</dbReference>
<dbReference type="PANTHER" id="PTHR18934:SF91">
    <property type="entry name" value="PRE-MRNA-SPLICING FACTOR ATP-DEPENDENT RNA HELICASE PRP16"/>
    <property type="match status" value="1"/>
</dbReference>
<dbReference type="Pfam" id="PF00270">
    <property type="entry name" value="DEAD"/>
    <property type="match status" value="1"/>
</dbReference>
<dbReference type="Pfam" id="PF00271">
    <property type="entry name" value="Helicase_C"/>
    <property type="match status" value="1"/>
</dbReference>
<dbReference type="SMART" id="SM00487">
    <property type="entry name" value="DEXDc"/>
    <property type="match status" value="1"/>
</dbReference>
<dbReference type="SMART" id="SM00490">
    <property type="entry name" value="HELICc"/>
    <property type="match status" value="1"/>
</dbReference>
<dbReference type="SUPFAM" id="SSF52540">
    <property type="entry name" value="P-loop containing nucleoside triphosphate hydrolases"/>
    <property type="match status" value="1"/>
</dbReference>
<dbReference type="PROSITE" id="PS51192">
    <property type="entry name" value="HELICASE_ATP_BIND_1"/>
    <property type="match status" value="1"/>
</dbReference>
<dbReference type="PROSITE" id="PS51194">
    <property type="entry name" value="HELICASE_CTER"/>
    <property type="match status" value="1"/>
</dbReference>
<protein>
    <recommendedName>
        <fullName>Putative ATP-dependent RNA helicase L540</fullName>
        <ecNumber>3.6.4.13</ecNumber>
    </recommendedName>
</protein>
<proteinExistence type="evidence at protein level"/>
<keyword id="KW-0067">ATP-binding</keyword>
<keyword id="KW-0347">Helicase</keyword>
<keyword id="KW-0378">Hydrolase</keyword>
<keyword id="KW-0547">Nucleotide-binding</keyword>
<keyword id="KW-1185">Reference proteome</keyword>
<keyword id="KW-0946">Virion</keyword>
<accession>Q5UQ96</accession>